<accession>Q8DER9</accession>
<proteinExistence type="inferred from homology"/>
<keyword id="KW-0963">Cytoplasm</keyword>
<keyword id="KW-0489">Methyltransferase</keyword>
<keyword id="KW-0545">Nucleotide biosynthesis</keyword>
<keyword id="KW-0808">Transferase</keyword>
<organism>
    <name type="scientific">Vibrio vulnificus (strain CMCP6)</name>
    <dbReference type="NCBI Taxonomy" id="216895"/>
    <lineage>
        <taxon>Bacteria</taxon>
        <taxon>Pseudomonadati</taxon>
        <taxon>Pseudomonadota</taxon>
        <taxon>Gammaproteobacteria</taxon>
        <taxon>Vibrionales</taxon>
        <taxon>Vibrionaceae</taxon>
        <taxon>Vibrio</taxon>
    </lineage>
</organism>
<evidence type="ECO:0000255" key="1">
    <source>
        <dbReference type="HAMAP-Rule" id="MF_00008"/>
    </source>
</evidence>
<name>TYSY_VIBVU</name>
<sequence>MKQYLELCRRIVDEGHWVENERTGKRCLTVINADLTYDVANNQFPLVTTRKSFWKAAVAELLGYIRGYDNAEDFRKLGTKTWDANANLNDAWLNNPYRKGEDDMGRVYGVQGRAWAKPDGGHIDQLRKIVDDLTRGVDDRGEILNFYNPGEFHMGCLRPCMYSHHFSLLGDTLYLNSTQRSCDVPLGLNFNMVQVYVFLAIMAQITGKKPGQAFHKIVNAHIYEDQLALMRDVQLKREPLQAPTFHINPEIKSLEDLETWVTLDDFWVEGYEHHDPIQYPFSV</sequence>
<gene>
    <name evidence="1" type="primary">thyA</name>
    <name type="ordered locus">VV1_0516</name>
</gene>
<dbReference type="EC" id="2.1.1.45" evidence="1"/>
<dbReference type="EMBL" id="AE016795">
    <property type="protein sequence ID" value="AAO09034.1"/>
    <property type="molecule type" value="Genomic_DNA"/>
</dbReference>
<dbReference type="RefSeq" id="WP_011078604.1">
    <property type="nucleotide sequence ID" value="NC_004459.3"/>
</dbReference>
<dbReference type="SMR" id="Q8DER9"/>
<dbReference type="KEGG" id="vvu:VV1_0516"/>
<dbReference type="HOGENOM" id="CLU_021669_0_1_6"/>
<dbReference type="UniPathway" id="UPA00575"/>
<dbReference type="Proteomes" id="UP000002275">
    <property type="component" value="Chromosome 1"/>
</dbReference>
<dbReference type="GO" id="GO:0005829">
    <property type="term" value="C:cytosol"/>
    <property type="evidence" value="ECO:0007669"/>
    <property type="project" value="TreeGrafter"/>
</dbReference>
<dbReference type="GO" id="GO:0004799">
    <property type="term" value="F:thymidylate synthase activity"/>
    <property type="evidence" value="ECO:0007669"/>
    <property type="project" value="UniProtKB-UniRule"/>
</dbReference>
<dbReference type="GO" id="GO:0006231">
    <property type="term" value="P:dTMP biosynthetic process"/>
    <property type="evidence" value="ECO:0007669"/>
    <property type="project" value="UniProtKB-UniRule"/>
</dbReference>
<dbReference type="GO" id="GO:0006235">
    <property type="term" value="P:dTTP biosynthetic process"/>
    <property type="evidence" value="ECO:0007669"/>
    <property type="project" value="UniProtKB-UniRule"/>
</dbReference>
<dbReference type="GO" id="GO:0032259">
    <property type="term" value="P:methylation"/>
    <property type="evidence" value="ECO:0007669"/>
    <property type="project" value="UniProtKB-KW"/>
</dbReference>
<dbReference type="CDD" id="cd00351">
    <property type="entry name" value="TS_Pyrimidine_HMase"/>
    <property type="match status" value="1"/>
</dbReference>
<dbReference type="FunFam" id="3.30.572.10:FF:000003">
    <property type="entry name" value="Thymidylate synthase"/>
    <property type="match status" value="1"/>
</dbReference>
<dbReference type="Gene3D" id="3.30.572.10">
    <property type="entry name" value="Thymidylate synthase/dCMP hydroxymethylase domain"/>
    <property type="match status" value="1"/>
</dbReference>
<dbReference type="HAMAP" id="MF_00008">
    <property type="entry name" value="Thymidy_synth_bact"/>
    <property type="match status" value="1"/>
</dbReference>
<dbReference type="InterPro" id="IPR045097">
    <property type="entry name" value="Thymidate_synth/dCMP_Mease"/>
</dbReference>
<dbReference type="InterPro" id="IPR023451">
    <property type="entry name" value="Thymidate_synth/dCMP_Mease_dom"/>
</dbReference>
<dbReference type="InterPro" id="IPR036926">
    <property type="entry name" value="Thymidate_synth/dCMP_Mease_sf"/>
</dbReference>
<dbReference type="InterPro" id="IPR000398">
    <property type="entry name" value="Thymidylate_synthase"/>
</dbReference>
<dbReference type="InterPro" id="IPR020940">
    <property type="entry name" value="Thymidylate_synthase_AS"/>
</dbReference>
<dbReference type="NCBIfam" id="NF002498">
    <property type="entry name" value="PRK01827.1-4"/>
    <property type="match status" value="1"/>
</dbReference>
<dbReference type="NCBIfam" id="TIGR03284">
    <property type="entry name" value="thym_sym"/>
    <property type="match status" value="1"/>
</dbReference>
<dbReference type="PANTHER" id="PTHR11548:SF9">
    <property type="entry name" value="THYMIDYLATE SYNTHASE"/>
    <property type="match status" value="1"/>
</dbReference>
<dbReference type="PANTHER" id="PTHR11548">
    <property type="entry name" value="THYMIDYLATE SYNTHASE 1"/>
    <property type="match status" value="1"/>
</dbReference>
<dbReference type="Pfam" id="PF00303">
    <property type="entry name" value="Thymidylat_synt"/>
    <property type="match status" value="1"/>
</dbReference>
<dbReference type="PRINTS" id="PR00108">
    <property type="entry name" value="THYMDSNTHASE"/>
</dbReference>
<dbReference type="SUPFAM" id="SSF55831">
    <property type="entry name" value="Thymidylate synthase/dCMP hydroxymethylase"/>
    <property type="match status" value="1"/>
</dbReference>
<dbReference type="PROSITE" id="PS00091">
    <property type="entry name" value="THYMIDYLATE_SYNTHASE"/>
    <property type="match status" value="1"/>
</dbReference>
<comment type="function">
    <text evidence="1">Catalyzes the reductive methylation of 2'-deoxyuridine-5'-monophosphate (dUMP) to 2'-deoxythymidine-5'-monophosphate (dTMP) while utilizing 5,10-methylenetetrahydrofolate (mTHF) as the methyl donor and reductant in the reaction, yielding dihydrofolate (DHF) as a by-product. This enzymatic reaction provides an intracellular de novo source of dTMP, an essential precursor for DNA biosynthesis.</text>
</comment>
<comment type="catalytic activity">
    <reaction evidence="1">
        <text>dUMP + (6R)-5,10-methylene-5,6,7,8-tetrahydrofolate = 7,8-dihydrofolate + dTMP</text>
        <dbReference type="Rhea" id="RHEA:12104"/>
        <dbReference type="ChEBI" id="CHEBI:15636"/>
        <dbReference type="ChEBI" id="CHEBI:57451"/>
        <dbReference type="ChEBI" id="CHEBI:63528"/>
        <dbReference type="ChEBI" id="CHEBI:246422"/>
        <dbReference type="EC" id="2.1.1.45"/>
    </reaction>
</comment>
<comment type="pathway">
    <text evidence="1">Pyrimidine metabolism; dTTP biosynthesis.</text>
</comment>
<comment type="subunit">
    <text evidence="1">Homodimer.</text>
</comment>
<comment type="subcellular location">
    <subcellularLocation>
        <location evidence="1">Cytoplasm</location>
    </subcellularLocation>
</comment>
<comment type="similarity">
    <text evidence="1">Belongs to the thymidylate synthase family. Bacterial-type ThyA subfamily.</text>
</comment>
<protein>
    <recommendedName>
        <fullName evidence="1">Thymidylate synthase</fullName>
        <shortName evidence="1">TS</shortName>
        <shortName evidence="1">TSase</shortName>
        <ecNumber evidence="1">2.1.1.45</ecNumber>
    </recommendedName>
</protein>
<reference key="1">
    <citation type="submission" date="2002-12" db="EMBL/GenBank/DDBJ databases">
        <title>Complete genome sequence of Vibrio vulnificus CMCP6.</title>
        <authorList>
            <person name="Rhee J.H."/>
            <person name="Kim S.Y."/>
            <person name="Chung S.S."/>
            <person name="Kim J.J."/>
            <person name="Moon Y.H."/>
            <person name="Jeong H."/>
            <person name="Choy H.E."/>
        </authorList>
    </citation>
    <scope>NUCLEOTIDE SEQUENCE [LARGE SCALE GENOMIC DNA]</scope>
    <source>
        <strain>CMCP6</strain>
    </source>
</reference>
<feature type="chain" id="PRO_0000141042" description="Thymidylate synthase">
    <location>
        <begin position="1"/>
        <end position="283"/>
    </location>
</feature>
<feature type="active site" description="Nucleophile" evidence="1">
    <location>
        <position position="160"/>
    </location>
</feature>
<feature type="binding site" evidence="1">
    <location>
        <position position="22"/>
    </location>
    <ligand>
        <name>dUMP</name>
        <dbReference type="ChEBI" id="CHEBI:246422"/>
    </ligand>
</feature>
<feature type="binding site" evidence="1">
    <location>
        <begin position="180"/>
        <end position="183"/>
    </location>
    <ligand>
        <name>dUMP</name>
        <dbReference type="ChEBI" id="CHEBI:246422"/>
    </ligand>
</feature>
<feature type="binding site" evidence="1">
    <location>
        <position position="183"/>
    </location>
    <ligand>
        <name>(6R)-5,10-methylene-5,6,7,8-tetrahydrofolate</name>
        <dbReference type="ChEBI" id="CHEBI:15636"/>
    </ligand>
</feature>
<feature type="binding site" evidence="1">
    <location>
        <position position="191"/>
    </location>
    <ligand>
        <name>dUMP</name>
        <dbReference type="ChEBI" id="CHEBI:246422"/>
    </ligand>
</feature>
<feature type="binding site" evidence="1">
    <location>
        <begin position="221"/>
        <end position="223"/>
    </location>
    <ligand>
        <name>dUMP</name>
        <dbReference type="ChEBI" id="CHEBI:246422"/>
    </ligand>
</feature>
<feature type="binding site" evidence="1">
    <location>
        <position position="282"/>
    </location>
    <ligand>
        <name>(6R)-5,10-methylene-5,6,7,8-tetrahydrofolate</name>
        <dbReference type="ChEBI" id="CHEBI:15636"/>
    </ligand>
</feature>